<feature type="peptide" id="PRO_0000076168" description="Angiotensin-1-converting enzyme inhibitory peptide">
    <location>
        <begin position="1"/>
        <end position="3"/>
    </location>
</feature>
<dbReference type="GO" id="GO:0008191">
    <property type="term" value="F:metalloendopeptidase inhibitor activity"/>
    <property type="evidence" value="ECO:0000314"/>
    <property type="project" value="UniProtKB"/>
</dbReference>
<dbReference type="GO" id="GO:0045776">
    <property type="term" value="P:negative regulation of blood pressure"/>
    <property type="evidence" value="ECO:0000314"/>
    <property type="project" value="UniProtKB"/>
</dbReference>
<organism>
    <name type="scientific">Macrocybe gigantea</name>
    <name type="common">Giant mushroom</name>
    <name type="synonym">Tricholoma giganteum</name>
    <dbReference type="NCBI Taxonomy" id="1491104"/>
    <lineage>
        <taxon>Eukaryota</taxon>
        <taxon>Fungi</taxon>
        <taxon>Dikarya</taxon>
        <taxon>Basidiomycota</taxon>
        <taxon>Agaricomycotina</taxon>
        <taxon>Agaricomycetes</taxon>
        <taxon>Agaricomycetidae</taxon>
        <taxon>Agaricales</taxon>
        <taxon>Tricholomatineae</taxon>
        <taxon>Callistosporiaceae</taxon>
        <taxon>Macrocybe</taxon>
    </lineage>
</organism>
<keyword id="KW-0903">Direct protein sequencing</keyword>
<keyword id="KW-0481">Metalloenzyme inhibitor</keyword>
<keyword id="KW-0483">Metalloprotease inhibitor</keyword>
<keyword id="KW-0646">Protease inhibitor</keyword>
<comment type="function">
    <text evidence="1">Inhibits competitively angiotensin I-converting enzyme. Administration to hypertensive rats at a dosage of 1 mg/kg results in a decrease in blood pressure.</text>
</comment>
<comment type="mass spectrometry"/>
<accession>P84761</accession>
<evidence type="ECO:0000269" key="1">
    <source>
    </source>
</evidence>
<evidence type="ECO:0000305" key="2"/>
<proteinExistence type="evidence at protein level"/>
<name>ACI_MACGN</name>
<protein>
    <recommendedName>
        <fullName>Angiotensin-1-converting enzyme inhibitory peptide</fullName>
    </recommendedName>
</protein>
<reference evidence="2" key="1">
    <citation type="journal article" date="2004" name="Peptides">
        <title>Isolation and characterization of a novel angiotensin I-converting enzyme inhibitory peptide derived from the edible mushroom Tricholoma giganteum.</title>
        <authorList>
            <person name="Hyoung Lee D."/>
            <person name="Ho Kim J."/>
            <person name="Sik Park J."/>
            <person name="Jun Choi Y."/>
            <person name="Soo Lee J."/>
        </authorList>
    </citation>
    <scope>PROTEIN SEQUENCE</scope>
    <scope>FUNCTION</scope>
    <scope>MASS SPECTROMETRY</scope>
</reference>
<sequence>GEP</sequence>